<geneLocation type="chloroplast"/>
<organism>
    <name type="scientific">Euglena gracilis</name>
    <dbReference type="NCBI Taxonomy" id="3039"/>
    <lineage>
        <taxon>Eukaryota</taxon>
        <taxon>Discoba</taxon>
        <taxon>Euglenozoa</taxon>
        <taxon>Euglenida</taxon>
        <taxon>Spirocuta</taxon>
        <taxon>Euglenophyceae</taxon>
        <taxon>Euglenales</taxon>
        <taxon>Euglenaceae</taxon>
        <taxon>Euglena</taxon>
    </lineage>
</organism>
<name>PSBB_EUGGR</name>
<feature type="chain" id="PRO_0000077481" description="Photosystem II CP47 reaction center protein">
    <location>
        <begin position="1"/>
        <end position="508"/>
    </location>
</feature>
<feature type="transmembrane region" description="Helical" evidence="1">
    <location>
        <begin position="21"/>
        <end position="36"/>
    </location>
</feature>
<feature type="transmembrane region" description="Helical" evidence="1">
    <location>
        <begin position="101"/>
        <end position="115"/>
    </location>
</feature>
<feature type="transmembrane region" description="Helical" evidence="1">
    <location>
        <begin position="140"/>
        <end position="156"/>
    </location>
</feature>
<feature type="transmembrane region" description="Helical" evidence="1">
    <location>
        <begin position="203"/>
        <end position="218"/>
    </location>
</feature>
<feature type="transmembrane region" description="Helical" evidence="1">
    <location>
        <begin position="237"/>
        <end position="252"/>
    </location>
</feature>
<feature type="transmembrane region" description="Helical" evidence="1">
    <location>
        <begin position="457"/>
        <end position="472"/>
    </location>
</feature>
<feature type="sequence conflict" description="In Ref. 1; CAA34016." evidence="2" ref="1">
    <original>F</original>
    <variation>L</variation>
    <location>
        <position position="19"/>
    </location>
</feature>
<feature type="sequence conflict" description="In Ref. 1; CAA34016." evidence="2" ref="1">
    <original>P</original>
    <variation>R</variation>
    <location>
        <position position="57"/>
    </location>
</feature>
<feature type="sequence conflict" description="In Ref. 1; CAA34016." evidence="2" ref="1">
    <original>A</original>
    <variation>G</variation>
    <location>
        <position position="197"/>
    </location>
</feature>
<feature type="sequence conflict" description="In Ref. 1; CAA34016." evidence="2" ref="1">
    <original>H</original>
    <variation>D</variation>
    <location>
        <position position="485"/>
    </location>
</feature>
<accession>P14813</accession>
<accession>Q33314</accession>
<dbReference type="EMBL" id="Z11874">
    <property type="status" value="NOT_ANNOTATED_CDS"/>
    <property type="molecule type" value="Genomic_DNA"/>
</dbReference>
<dbReference type="EMBL" id="X15903">
    <property type="protein sequence ID" value="CAA34016.1"/>
    <property type="molecule type" value="Genomic_DNA"/>
</dbReference>
<dbReference type="EMBL" id="X70810">
    <property type="protein sequence ID" value="CAA50133.1"/>
    <property type="molecule type" value="Genomic_DNA"/>
</dbReference>
<dbReference type="PIR" id="S07546">
    <property type="entry name" value="S07546"/>
</dbReference>
<dbReference type="RefSeq" id="NP_041946.1">
    <property type="nucleotide sequence ID" value="NC_001603.2"/>
</dbReference>
<dbReference type="SMR" id="P14813"/>
<dbReference type="GeneID" id="807503"/>
<dbReference type="GO" id="GO:0009535">
    <property type="term" value="C:chloroplast thylakoid membrane"/>
    <property type="evidence" value="ECO:0007669"/>
    <property type="project" value="UniProtKB-SubCell"/>
</dbReference>
<dbReference type="GO" id="GO:0009523">
    <property type="term" value="C:photosystem II"/>
    <property type="evidence" value="ECO:0007669"/>
    <property type="project" value="UniProtKB-KW"/>
</dbReference>
<dbReference type="GO" id="GO:0016168">
    <property type="term" value="F:chlorophyll binding"/>
    <property type="evidence" value="ECO:0007669"/>
    <property type="project" value="UniProtKB-UniRule"/>
</dbReference>
<dbReference type="GO" id="GO:0045156">
    <property type="term" value="F:electron transporter, transferring electrons within the cyclic electron transport pathway of photosynthesis activity"/>
    <property type="evidence" value="ECO:0007669"/>
    <property type="project" value="InterPro"/>
</dbReference>
<dbReference type="GO" id="GO:0009772">
    <property type="term" value="P:photosynthetic electron transport in photosystem II"/>
    <property type="evidence" value="ECO:0007669"/>
    <property type="project" value="InterPro"/>
</dbReference>
<dbReference type="Gene3D" id="3.10.680.10">
    <property type="entry name" value="Photosystem II CP47 reaction center protein"/>
    <property type="match status" value="1"/>
</dbReference>
<dbReference type="HAMAP" id="MF_01495">
    <property type="entry name" value="PSII_PsbB_CP47"/>
    <property type="match status" value="1"/>
</dbReference>
<dbReference type="InterPro" id="IPR000932">
    <property type="entry name" value="PS_antenna-like"/>
</dbReference>
<dbReference type="InterPro" id="IPR036001">
    <property type="entry name" value="PS_II_antenna-like_sf"/>
</dbReference>
<dbReference type="InterPro" id="IPR017486">
    <property type="entry name" value="PSII_PsbB"/>
</dbReference>
<dbReference type="NCBIfam" id="TIGR03039">
    <property type="entry name" value="PS_II_CP47"/>
    <property type="match status" value="1"/>
</dbReference>
<dbReference type="Pfam" id="PF00421">
    <property type="entry name" value="PSII"/>
    <property type="match status" value="1"/>
</dbReference>
<dbReference type="SUPFAM" id="SSF161077">
    <property type="entry name" value="Photosystem II antenna protein-like"/>
    <property type="match status" value="1"/>
</dbReference>
<keyword id="KW-0148">Chlorophyll</keyword>
<keyword id="KW-0150">Chloroplast</keyword>
<keyword id="KW-0157">Chromophore</keyword>
<keyword id="KW-0472">Membrane</keyword>
<keyword id="KW-0602">Photosynthesis</keyword>
<keyword id="KW-0604">Photosystem II</keyword>
<keyword id="KW-0934">Plastid</keyword>
<keyword id="KW-0793">Thylakoid</keyword>
<keyword id="KW-0812">Transmembrane</keyword>
<keyword id="KW-1133">Transmembrane helix</keyword>
<proteinExistence type="inferred from homology"/>
<protein>
    <recommendedName>
        <fullName evidence="1">Photosystem II CP47 reaction center protein</fullName>
    </recommendedName>
    <alternativeName>
        <fullName evidence="1">PSII 47 kDa protein</fullName>
    </alternativeName>
    <alternativeName>
        <fullName evidence="1">Protein CP-47</fullName>
    </alternativeName>
</protein>
<gene>
    <name evidence="1" type="primary">psbB</name>
</gene>
<sequence length="508" mass="56325">MGLPWYRVHTVVLNDPGRFISVHLMHTALVSGWAGSMALYELAIFDPSDVALNPMWPQGMFVLPFMTRLGVTKSWGAWSVTGESFSDPGIWSYEGVAVAHIILSGLLFLAAIWHWVYWDLDLFRDPASGELKLDLPRVFGVHLFLSGALCLAFGVFHVTGVFGPGIWVSDPYGLSGKIEPVIPSWGAEGFDPYNVGAIASHHIAAGLLGLIAGGFHVLVRPSQRLFVLLRMGNIETVLSSSIAAVFWSAFVVSGTMWYGSASTPIELFGPTRYQWDKGYFQEEIERRVQASLSDGCSLSEAWGAISPKLAFYDYIGNNPAKGGLFRSGPMNNGDGIATAWLGHAVFIDKEGNSLFVRRMPTFFETFPVILLDQNGVVRADIPFRRAESKYSIEQVGVTVRFFGGSFDTLSFNDPATVKRYARHAQLGEIFDFNRSILQSDGVFRSSPRGWFTFGHLSFALIFFFGHIWHGARTLFKYLLAGIDPHLEEEIEFGTFEKLGDDTTKKELV</sequence>
<comment type="function">
    <text evidence="1">One of the components of the core complex of photosystem II (PSII). It binds chlorophyll and helps catalyze the primary light-induced photochemical processes of PSII. PSII is a light-driven water:plastoquinone oxidoreductase, using light energy to abstract electrons from H(2)O, generating O(2) and a proton gradient subsequently used for ATP formation.</text>
</comment>
<comment type="cofactor">
    <text evidence="1">Binds multiple chlorophylls. PSII binds additional chlorophylls, carotenoids and specific lipids.</text>
</comment>
<comment type="subunit">
    <text evidence="2">PSII is composed of 1 copy each of membrane proteins PsbA, PsbB, PsbC, PsbD, PsbE, PsbF, PsbH, PsbI, PsbJ, PsbK, PsbL, PsbM, PsbT, PsbY, PsbZ, Psb30/Ycf12, at least 3 peripheral proteins of the oxygen-evolving complex and a large number of cofactors. It forms dimeric complexes.</text>
</comment>
<comment type="subcellular location">
    <subcellularLocation>
        <location evidence="1">Plastid</location>
        <location evidence="1">Chloroplast thylakoid membrane</location>
        <topology evidence="1">Multi-pass membrane protein</topology>
    </subcellularLocation>
</comment>
<comment type="similarity">
    <text evidence="1">Belongs to the PsbB/PsbC family. PsbB subfamily.</text>
</comment>
<evidence type="ECO:0000255" key="1">
    <source>
        <dbReference type="HAMAP-Rule" id="MF_01495"/>
    </source>
</evidence>
<evidence type="ECO:0000305" key="2"/>
<reference key="1">
    <citation type="journal article" date="1989" name="Plant Mol. Biol.">
        <title>Nucleotide sequence of the psbB gene of Euglena gracilis.</title>
        <authorList>
            <person name="Keller M."/>
            <person name="Weil J.H."/>
            <person name="Nair C.K.K."/>
        </authorList>
    </citation>
    <scope>NUCLEOTIDE SEQUENCE [GENOMIC DNA]</scope>
    <source>
        <strain>Z / UTEX 753</strain>
    </source>
</reference>
<reference key="2">
    <citation type="journal article" date="1993" name="Nucleic Acids Res.">
        <title>Complete sequence of Euglena gracilis chloroplast DNA.</title>
        <authorList>
            <person name="Hallick R.B."/>
            <person name="Hong L."/>
            <person name="Drager R.G."/>
            <person name="Favreau M.R."/>
            <person name="Monfort A."/>
            <person name="Orsat B."/>
            <person name="Spielmann A."/>
            <person name="Stutz E."/>
        </authorList>
    </citation>
    <scope>NUCLEOTIDE SEQUENCE [LARGE SCALE GENOMIC DNA]</scope>
    <source>
        <strain>Z / UTEX 753</strain>
    </source>
</reference>